<comment type="similarity">
    <text evidence="1">Belongs to the universal ribosomal protein uS2 family.</text>
</comment>
<feature type="chain" id="PRO_1000004003" description="Small ribosomal subunit protein uS2">
    <location>
        <begin position="1"/>
        <end position="273"/>
    </location>
</feature>
<name>RS2_MYCVP</name>
<organism>
    <name type="scientific">Mycolicibacterium vanbaalenii (strain DSM 7251 / JCM 13017 / BCRC 16820 / KCTC 9966 / NRRL B-24157 / PYR-1)</name>
    <name type="common">Mycobacterium vanbaalenii</name>
    <dbReference type="NCBI Taxonomy" id="350058"/>
    <lineage>
        <taxon>Bacteria</taxon>
        <taxon>Bacillati</taxon>
        <taxon>Actinomycetota</taxon>
        <taxon>Actinomycetes</taxon>
        <taxon>Mycobacteriales</taxon>
        <taxon>Mycobacteriaceae</taxon>
        <taxon>Mycolicibacterium</taxon>
    </lineage>
</organism>
<accession>A1T773</accession>
<proteinExistence type="inferred from homology"/>
<reference key="1">
    <citation type="submission" date="2006-12" db="EMBL/GenBank/DDBJ databases">
        <title>Complete sequence of Mycobacterium vanbaalenii PYR-1.</title>
        <authorList>
            <consortium name="US DOE Joint Genome Institute"/>
            <person name="Copeland A."/>
            <person name="Lucas S."/>
            <person name="Lapidus A."/>
            <person name="Barry K."/>
            <person name="Detter J.C."/>
            <person name="Glavina del Rio T."/>
            <person name="Hammon N."/>
            <person name="Israni S."/>
            <person name="Dalin E."/>
            <person name="Tice H."/>
            <person name="Pitluck S."/>
            <person name="Singan V."/>
            <person name="Schmutz J."/>
            <person name="Larimer F."/>
            <person name="Land M."/>
            <person name="Hauser L."/>
            <person name="Kyrpides N."/>
            <person name="Anderson I.J."/>
            <person name="Miller C."/>
            <person name="Richardson P."/>
        </authorList>
    </citation>
    <scope>NUCLEOTIDE SEQUENCE [LARGE SCALE GENOMIC DNA]</scope>
    <source>
        <strain>DSM 7251 / JCM 13017 / BCRC 16820 / KCTC 9966 / NRRL B-24157 / PYR-1</strain>
    </source>
</reference>
<dbReference type="EMBL" id="CP000511">
    <property type="protein sequence ID" value="ABM13023.1"/>
    <property type="molecule type" value="Genomic_DNA"/>
</dbReference>
<dbReference type="RefSeq" id="WP_011779436.1">
    <property type="nucleotide sequence ID" value="NZ_JACKSD010000134.1"/>
</dbReference>
<dbReference type="SMR" id="A1T773"/>
<dbReference type="STRING" id="350058.Mvan_2209"/>
<dbReference type="KEGG" id="mva:Mvan_2209"/>
<dbReference type="eggNOG" id="COG0052">
    <property type="taxonomic scope" value="Bacteria"/>
</dbReference>
<dbReference type="HOGENOM" id="CLU_040318_2_3_11"/>
<dbReference type="Proteomes" id="UP000009159">
    <property type="component" value="Chromosome"/>
</dbReference>
<dbReference type="GO" id="GO:0022627">
    <property type="term" value="C:cytosolic small ribosomal subunit"/>
    <property type="evidence" value="ECO:0007669"/>
    <property type="project" value="TreeGrafter"/>
</dbReference>
<dbReference type="GO" id="GO:0003735">
    <property type="term" value="F:structural constituent of ribosome"/>
    <property type="evidence" value="ECO:0007669"/>
    <property type="project" value="InterPro"/>
</dbReference>
<dbReference type="GO" id="GO:0006412">
    <property type="term" value="P:translation"/>
    <property type="evidence" value="ECO:0007669"/>
    <property type="project" value="UniProtKB-UniRule"/>
</dbReference>
<dbReference type="CDD" id="cd01425">
    <property type="entry name" value="RPS2"/>
    <property type="match status" value="1"/>
</dbReference>
<dbReference type="FunFam" id="1.10.287.610:FF:000001">
    <property type="entry name" value="30S ribosomal protein S2"/>
    <property type="match status" value="1"/>
</dbReference>
<dbReference type="Gene3D" id="3.40.50.10490">
    <property type="entry name" value="Glucose-6-phosphate isomerase like protein, domain 1"/>
    <property type="match status" value="1"/>
</dbReference>
<dbReference type="Gene3D" id="1.10.287.610">
    <property type="entry name" value="Helix hairpin bin"/>
    <property type="match status" value="1"/>
</dbReference>
<dbReference type="HAMAP" id="MF_00291_B">
    <property type="entry name" value="Ribosomal_uS2_B"/>
    <property type="match status" value="1"/>
</dbReference>
<dbReference type="InterPro" id="IPR001865">
    <property type="entry name" value="Ribosomal_uS2"/>
</dbReference>
<dbReference type="InterPro" id="IPR005706">
    <property type="entry name" value="Ribosomal_uS2_bac/mit/plastid"/>
</dbReference>
<dbReference type="InterPro" id="IPR018130">
    <property type="entry name" value="Ribosomal_uS2_CS"/>
</dbReference>
<dbReference type="InterPro" id="IPR023591">
    <property type="entry name" value="Ribosomal_uS2_flav_dom_sf"/>
</dbReference>
<dbReference type="NCBIfam" id="TIGR01011">
    <property type="entry name" value="rpsB_bact"/>
    <property type="match status" value="1"/>
</dbReference>
<dbReference type="PANTHER" id="PTHR12534">
    <property type="entry name" value="30S RIBOSOMAL PROTEIN S2 PROKARYOTIC AND ORGANELLAR"/>
    <property type="match status" value="1"/>
</dbReference>
<dbReference type="PANTHER" id="PTHR12534:SF0">
    <property type="entry name" value="SMALL RIBOSOMAL SUBUNIT PROTEIN US2M"/>
    <property type="match status" value="1"/>
</dbReference>
<dbReference type="Pfam" id="PF00318">
    <property type="entry name" value="Ribosomal_S2"/>
    <property type="match status" value="1"/>
</dbReference>
<dbReference type="PRINTS" id="PR00395">
    <property type="entry name" value="RIBOSOMALS2"/>
</dbReference>
<dbReference type="SUPFAM" id="SSF52313">
    <property type="entry name" value="Ribosomal protein S2"/>
    <property type="match status" value="1"/>
</dbReference>
<dbReference type="PROSITE" id="PS00962">
    <property type="entry name" value="RIBOSOMAL_S2_1"/>
    <property type="match status" value="1"/>
</dbReference>
<gene>
    <name evidence="1" type="primary">rpsB</name>
    <name type="ordered locus">Mvan_2209</name>
</gene>
<keyword id="KW-0687">Ribonucleoprotein</keyword>
<keyword id="KW-0689">Ribosomal protein</keyword>
<sequence length="273" mass="29874">MAVVTMKQLLDSGAHFGHQTRRWNPKMKRFIFTDRNGIYIIDLQQTLTYIDKAYEFVKETVAHGGSIMFVGTKKQAQESIAEEATRVGMPYVNQRWLGGMLTNFSTVHKRLQRLKELEAMEQTGGFEGRTKKEILMLTREKNKLERSLGGIRDMQKVPSAIWVVDTNKEHLAVAEARKLNIPIIAILDTNCDPDLVDYPIPGNDDAIRSAALLTKVVASAVAEGLQARAGAGADKAAAEAAEPLAEWEQELLAGATTAAPEAAAGEAAAPEQS</sequence>
<evidence type="ECO:0000255" key="1">
    <source>
        <dbReference type="HAMAP-Rule" id="MF_00291"/>
    </source>
</evidence>
<evidence type="ECO:0000305" key="2"/>
<protein>
    <recommendedName>
        <fullName evidence="1">Small ribosomal subunit protein uS2</fullName>
    </recommendedName>
    <alternativeName>
        <fullName evidence="2">30S ribosomal protein S2</fullName>
    </alternativeName>
</protein>